<protein>
    <recommendedName>
        <fullName evidence="1">CRISPR-associated endonuclease Cas1 2</fullName>
        <ecNumber evidence="1">3.1.-.-</ecNumber>
    </recommendedName>
</protein>
<organism>
    <name type="scientific">Thermus thermophilus (strain ATCC 27634 / DSM 579 / HB8)</name>
    <dbReference type="NCBI Taxonomy" id="300852"/>
    <lineage>
        <taxon>Bacteria</taxon>
        <taxon>Thermotogati</taxon>
        <taxon>Deinococcota</taxon>
        <taxon>Deinococci</taxon>
        <taxon>Thermales</taxon>
        <taxon>Thermaceae</taxon>
        <taxon>Thermus</taxon>
    </lineage>
</organism>
<accession>Q53WG8</accession>
<dbReference type="EC" id="3.1.-.-" evidence="1"/>
<dbReference type="EMBL" id="AP008227">
    <property type="protein sequence ID" value="BAD71989.1"/>
    <property type="molecule type" value="Genomic_DNA"/>
</dbReference>
<dbReference type="RefSeq" id="YP_145432.1">
    <property type="nucleotide sequence ID" value="NC_006462.1"/>
</dbReference>
<dbReference type="PDB" id="6KDV">
    <property type="method" value="X-ray"/>
    <property type="resolution" value="3.11 A"/>
    <property type="chains" value="A/B/C/D=1-325"/>
</dbReference>
<dbReference type="PDB" id="6KE1">
    <property type="method" value="X-ray"/>
    <property type="resolution" value="3.39 A"/>
    <property type="chains" value="A/B=1-325"/>
</dbReference>
<dbReference type="PDBsum" id="6KDV"/>
<dbReference type="PDBsum" id="6KE1"/>
<dbReference type="SMR" id="Q53WG8"/>
<dbReference type="EnsemblBacteria" id="BAD71989">
    <property type="protein sequence ID" value="BAD71989"/>
    <property type="gene ID" value="BAD71989"/>
</dbReference>
<dbReference type="GeneID" id="3169280"/>
<dbReference type="KEGG" id="ttj:TTHB193"/>
<dbReference type="PATRIC" id="fig|300852.9.peg.2144"/>
<dbReference type="HOGENOM" id="CLU_077904_0_0_0"/>
<dbReference type="PhylomeDB" id="Q53WG8"/>
<dbReference type="Proteomes" id="UP000000532">
    <property type="component" value="Plasmid pTT27"/>
</dbReference>
<dbReference type="GO" id="GO:0003677">
    <property type="term" value="F:DNA binding"/>
    <property type="evidence" value="ECO:0007669"/>
    <property type="project" value="UniProtKB-KW"/>
</dbReference>
<dbReference type="GO" id="GO:0004520">
    <property type="term" value="F:DNA endonuclease activity"/>
    <property type="evidence" value="ECO:0007669"/>
    <property type="project" value="InterPro"/>
</dbReference>
<dbReference type="GO" id="GO:0046872">
    <property type="term" value="F:metal ion binding"/>
    <property type="evidence" value="ECO:0007669"/>
    <property type="project" value="UniProtKB-UniRule"/>
</dbReference>
<dbReference type="GO" id="GO:0051607">
    <property type="term" value="P:defense response to virus"/>
    <property type="evidence" value="ECO:0007669"/>
    <property type="project" value="UniProtKB-UniRule"/>
</dbReference>
<dbReference type="GO" id="GO:0043571">
    <property type="term" value="P:maintenance of CRISPR repeat elements"/>
    <property type="evidence" value="ECO:0007669"/>
    <property type="project" value="UniProtKB-UniRule"/>
</dbReference>
<dbReference type="CDD" id="cd09719">
    <property type="entry name" value="Cas1_I-E"/>
    <property type="match status" value="1"/>
</dbReference>
<dbReference type="Gene3D" id="1.20.120.920">
    <property type="entry name" value="CRISPR-associated endonuclease Cas1, C-terminal domain"/>
    <property type="match status" value="1"/>
</dbReference>
<dbReference type="Gene3D" id="3.100.10.20">
    <property type="entry name" value="CRISPR-associated endonuclease Cas1, N-terminal domain"/>
    <property type="match status" value="1"/>
</dbReference>
<dbReference type="HAMAP" id="MF_01470">
    <property type="entry name" value="Cas1"/>
    <property type="match status" value="1"/>
</dbReference>
<dbReference type="InterPro" id="IPR050646">
    <property type="entry name" value="Cas1"/>
</dbReference>
<dbReference type="InterPro" id="IPR033641">
    <property type="entry name" value="Cas1_I-E"/>
</dbReference>
<dbReference type="InterPro" id="IPR002729">
    <property type="entry name" value="CRISPR-assoc_Cas1"/>
</dbReference>
<dbReference type="InterPro" id="IPR042206">
    <property type="entry name" value="CRISPR-assoc_Cas1_C"/>
</dbReference>
<dbReference type="InterPro" id="IPR019851">
    <property type="entry name" value="CRISPR-assoc_Cas1_ECOLI"/>
</dbReference>
<dbReference type="InterPro" id="IPR042211">
    <property type="entry name" value="CRISPR-assoc_Cas1_N"/>
</dbReference>
<dbReference type="NCBIfam" id="TIGR00287">
    <property type="entry name" value="cas1"/>
    <property type="match status" value="1"/>
</dbReference>
<dbReference type="NCBIfam" id="TIGR03638">
    <property type="entry name" value="cas1_ECOLI"/>
    <property type="match status" value="1"/>
</dbReference>
<dbReference type="PANTHER" id="PTHR34353:SF3">
    <property type="entry name" value="CRISPR-ASSOCIATED ENDONUCLEASE CAS1"/>
    <property type="match status" value="1"/>
</dbReference>
<dbReference type="PANTHER" id="PTHR34353">
    <property type="entry name" value="CRISPR-ASSOCIATED ENDONUCLEASE CAS1 1"/>
    <property type="match status" value="1"/>
</dbReference>
<dbReference type="Pfam" id="PF01867">
    <property type="entry name" value="Cas_Cas1"/>
    <property type="match status" value="1"/>
</dbReference>
<reference key="1">
    <citation type="submission" date="2004-11" db="EMBL/GenBank/DDBJ databases">
        <title>Complete genome sequence of Thermus thermophilus HB8.</title>
        <authorList>
            <person name="Masui R."/>
            <person name="Kurokawa K."/>
            <person name="Nakagawa N."/>
            <person name="Tokunaga F."/>
            <person name="Koyama Y."/>
            <person name="Shibata T."/>
            <person name="Oshima T."/>
            <person name="Yokoyama S."/>
            <person name="Yasunaga T."/>
            <person name="Kuramitsu S."/>
        </authorList>
    </citation>
    <scope>NUCLEOTIDE SEQUENCE [LARGE SCALE GENOMIC DNA]</scope>
    <source>
        <strain>ATCC 27634 / DSM 579 / HB8</strain>
    </source>
</reference>
<comment type="function">
    <text evidence="1">CRISPR (clustered regularly interspaced short palindromic repeat), is an adaptive immune system that provides protection against mobile genetic elements (viruses, transposable elements and conjugative plasmids). CRISPR clusters contain spacers, sequences complementary to antecedent mobile elements, and target invading nucleic acids. CRISPR clusters are transcribed and processed into CRISPR RNA (crRNA). Acts as a dsDNA endonuclease. Involved in the integration of spacer DNA into the CRISPR cassette.</text>
</comment>
<comment type="cofactor">
    <cofactor evidence="1">
        <name>Mg(2+)</name>
        <dbReference type="ChEBI" id="CHEBI:18420"/>
    </cofactor>
    <cofactor evidence="1">
        <name>Mn(2+)</name>
        <dbReference type="ChEBI" id="CHEBI:29035"/>
    </cofactor>
</comment>
<comment type="subunit">
    <text evidence="1">Homodimer, forms a heterotetramer with a Cas2 homodimer.</text>
</comment>
<comment type="similarity">
    <text evidence="1">Belongs to the CRISPR-associated endonuclease Cas1 family.</text>
</comment>
<evidence type="ECO:0000255" key="1">
    <source>
        <dbReference type="HAMAP-Rule" id="MF_01470"/>
    </source>
</evidence>
<evidence type="ECO:0000256" key="2">
    <source>
        <dbReference type="SAM" id="MobiDB-lite"/>
    </source>
</evidence>
<evidence type="ECO:0007829" key="3">
    <source>
        <dbReference type="PDB" id="6KDV"/>
    </source>
</evidence>
<evidence type="ECO:0007829" key="4">
    <source>
        <dbReference type="PDB" id="6KE1"/>
    </source>
</evidence>
<keyword id="KW-0002">3D-structure</keyword>
<keyword id="KW-0051">Antiviral defense</keyword>
<keyword id="KW-0238">DNA-binding</keyword>
<keyword id="KW-0255">Endonuclease</keyword>
<keyword id="KW-0378">Hydrolase</keyword>
<keyword id="KW-0460">Magnesium</keyword>
<keyword id="KW-0464">Manganese</keyword>
<keyword id="KW-0479">Metal-binding</keyword>
<keyword id="KW-0540">Nuclease</keyword>
<keyword id="KW-0614">Plasmid</keyword>
<keyword id="KW-1185">Reference proteome</keyword>
<geneLocation type="plasmid">
    <name>pTT27</name>
</geneLocation>
<proteinExistence type="evidence at protein level"/>
<feature type="chain" id="PRO_0000417091" description="CRISPR-associated endonuclease Cas1 2">
    <location>
        <begin position="1"/>
        <end position="325"/>
    </location>
</feature>
<feature type="region of interest" description="Disordered" evidence="2">
    <location>
        <begin position="283"/>
        <end position="325"/>
    </location>
</feature>
<feature type="compositionally biased region" description="Acidic residues" evidence="2">
    <location>
        <begin position="315"/>
        <end position="325"/>
    </location>
</feature>
<feature type="binding site" evidence="1">
    <location>
        <position position="145"/>
    </location>
    <ligand>
        <name>Mn(2+)</name>
        <dbReference type="ChEBI" id="CHEBI:29035"/>
    </ligand>
</feature>
<feature type="binding site" evidence="1">
    <location>
        <position position="212"/>
    </location>
    <ligand>
        <name>Mn(2+)</name>
        <dbReference type="ChEBI" id="CHEBI:29035"/>
    </ligand>
</feature>
<feature type="binding site" evidence="1">
    <location>
        <position position="225"/>
    </location>
    <ligand>
        <name>Mn(2+)</name>
        <dbReference type="ChEBI" id="CHEBI:29035"/>
    </ligand>
</feature>
<feature type="strand" evidence="3">
    <location>
        <begin position="16"/>
        <end position="20"/>
    </location>
</feature>
<feature type="strand" evidence="3">
    <location>
        <begin position="23"/>
        <end position="25"/>
    </location>
</feature>
<feature type="strand" evidence="3">
    <location>
        <begin position="27"/>
        <end position="33"/>
    </location>
</feature>
<feature type="strand" evidence="3">
    <location>
        <begin position="36"/>
        <end position="41"/>
    </location>
</feature>
<feature type="strand" evidence="3">
    <location>
        <begin position="44"/>
        <end position="48"/>
    </location>
</feature>
<feature type="strand" evidence="3">
    <location>
        <begin position="54"/>
        <end position="58"/>
    </location>
</feature>
<feature type="strand" evidence="3">
    <location>
        <begin position="63"/>
        <end position="65"/>
    </location>
</feature>
<feature type="helix" evidence="3">
    <location>
        <begin position="66"/>
        <end position="74"/>
    </location>
</feature>
<feature type="strand" evidence="3">
    <location>
        <begin position="78"/>
        <end position="81"/>
    </location>
</feature>
<feature type="strand" evidence="4">
    <location>
        <begin position="83"/>
        <end position="85"/>
    </location>
</feature>
<feature type="strand" evidence="3">
    <location>
        <begin position="89"/>
        <end position="92"/>
    </location>
</feature>
<feature type="strand" evidence="3">
    <location>
        <begin position="96"/>
        <end position="99"/>
    </location>
</feature>
<feature type="helix" evidence="3">
    <location>
        <begin position="101"/>
        <end position="111"/>
    </location>
</feature>
<feature type="helix" evidence="3">
    <location>
        <begin position="113"/>
        <end position="125"/>
    </location>
</feature>
<feature type="turn" evidence="3">
    <location>
        <begin position="138"/>
        <end position="140"/>
    </location>
</feature>
<feature type="helix" evidence="3">
    <location>
        <begin position="141"/>
        <end position="160"/>
    </location>
</feature>
<feature type="helix" evidence="3">
    <location>
        <begin position="179"/>
        <end position="201"/>
    </location>
</feature>
<feature type="strand" evidence="3">
    <location>
        <begin position="210"/>
        <end position="212"/>
    </location>
</feature>
<feature type="helix" evidence="3">
    <location>
        <begin position="218"/>
        <end position="242"/>
    </location>
</feature>
<feature type="strand" evidence="3">
    <location>
        <begin position="244"/>
        <end position="246"/>
    </location>
</feature>
<feature type="helix" evidence="3">
    <location>
        <begin position="247"/>
        <end position="262"/>
    </location>
</feature>
<feature type="helix" evidence="3">
    <location>
        <begin position="264"/>
        <end position="274"/>
    </location>
</feature>
<name>CAS1B_THET8</name>
<sequence length="325" mass="35724">MPPVSSARNLKELPKFRDGLSYLYVEHAVVEREAGGIGIYDQEGLTLAPVAGLGVLFLGPGTRITHAAVRLLAENGCTVAWVGEGMARFYAQGLGDTRSAARFYRQARAWADPALHLEVVMRLYRMRFSEPLPEGLTLEQVRGLEGVRVRNAYARWSRETGVPWYGRSYDRGNWRAADPVNRALSAGASYLYGLAHAAIVSLGFSPALGFIHTGKLLSFVYDIADLYKADYLVPAAFRTVAESEEAVERRVRRALREAIQEGRLLERMAEDLLNLFRGLGLPEEEDPVEEDPTRPGGLWDLEGEVEGGVAYGGDDPGEGAEEPEG</sequence>
<gene>
    <name evidence="1" type="primary">cas1-2</name>
    <name type="ordered locus">TTHB193</name>
</gene>